<reference key="1">
    <citation type="journal article" date="2009" name="Appl. Environ. Microbiol.">
        <title>Complete genome sequence of the chemolithoautotrophic marine magnetotactic coccus strain MC-1.</title>
        <authorList>
            <person name="Schubbe S."/>
            <person name="Williams T.J."/>
            <person name="Xie G."/>
            <person name="Kiss H.E."/>
            <person name="Brettin T.S."/>
            <person name="Martinez D."/>
            <person name="Ross C.A."/>
            <person name="Schuler D."/>
            <person name="Cox B.L."/>
            <person name="Nealson K.H."/>
            <person name="Bazylinski D.A."/>
        </authorList>
    </citation>
    <scope>NUCLEOTIDE SEQUENCE [LARGE SCALE GENOMIC DNA]</scope>
    <source>
        <strain>ATCC BAA-1437 / JCM 17883 / MC-1</strain>
    </source>
</reference>
<accession>A0LC15</accession>
<comment type="function">
    <text evidence="1">Necessary for efficient RNA polymerase transcription elongation past template-encoded arresting sites. The arresting sites in DNA have the property of trapping a certain fraction of elongating RNA polymerases that pass through, resulting in locked ternary complexes. Cleavage of the nascent transcript by cleavage factors such as GreA or GreB allows the resumption of elongation from the new 3'terminus. GreA releases sequences of 2 to 3 nucleotides.</text>
</comment>
<comment type="similarity">
    <text evidence="1">Belongs to the GreA/GreB family.</text>
</comment>
<proteinExistence type="inferred from homology"/>
<feature type="chain" id="PRO_1000034275" description="Transcription elongation factor GreA">
    <location>
        <begin position="1"/>
        <end position="157"/>
    </location>
</feature>
<feature type="coiled-coil region" evidence="1">
    <location>
        <begin position="9"/>
        <end position="30"/>
    </location>
</feature>
<sequence>MNPKVPMTLEGAQQLKEELKRRKTTDRKRIIAAIEEARAHGDLSENAEYHAAKEQQSFNEGRIAKLEGMLASAEVIDTSRLNSSRIVFGAKVTVIDEDTEEESTYHIVGDEEADLEKGKISISSPMARGMIGKEAGDSIEVRAPGGTRHFEVVEITF</sequence>
<gene>
    <name evidence="1" type="primary">greA</name>
    <name type="ordered locus">Mmc1_3017</name>
</gene>
<protein>
    <recommendedName>
        <fullName evidence="1">Transcription elongation factor GreA</fullName>
    </recommendedName>
    <alternativeName>
        <fullName evidence="1">Transcript cleavage factor GreA</fullName>
    </alternativeName>
</protein>
<evidence type="ECO:0000255" key="1">
    <source>
        <dbReference type="HAMAP-Rule" id="MF_00105"/>
    </source>
</evidence>
<name>GREA_MAGMM</name>
<organism>
    <name type="scientific">Magnetococcus marinus (strain ATCC BAA-1437 / JCM 17883 / MC-1)</name>
    <dbReference type="NCBI Taxonomy" id="156889"/>
    <lineage>
        <taxon>Bacteria</taxon>
        <taxon>Pseudomonadati</taxon>
        <taxon>Pseudomonadota</taxon>
        <taxon>Alphaproteobacteria</taxon>
        <taxon>Magnetococcales</taxon>
        <taxon>Magnetococcaceae</taxon>
        <taxon>Magnetococcus</taxon>
    </lineage>
</organism>
<dbReference type="EMBL" id="CP000471">
    <property type="protein sequence ID" value="ABK45508.1"/>
    <property type="molecule type" value="Genomic_DNA"/>
</dbReference>
<dbReference type="RefSeq" id="WP_011714572.1">
    <property type="nucleotide sequence ID" value="NC_008576.1"/>
</dbReference>
<dbReference type="SMR" id="A0LC15"/>
<dbReference type="STRING" id="156889.Mmc1_3017"/>
<dbReference type="KEGG" id="mgm:Mmc1_3017"/>
<dbReference type="eggNOG" id="COG0782">
    <property type="taxonomic scope" value="Bacteria"/>
</dbReference>
<dbReference type="HOGENOM" id="CLU_101379_2_0_5"/>
<dbReference type="OrthoDB" id="9808774at2"/>
<dbReference type="Proteomes" id="UP000002586">
    <property type="component" value="Chromosome"/>
</dbReference>
<dbReference type="GO" id="GO:0003677">
    <property type="term" value="F:DNA binding"/>
    <property type="evidence" value="ECO:0007669"/>
    <property type="project" value="UniProtKB-UniRule"/>
</dbReference>
<dbReference type="GO" id="GO:0070063">
    <property type="term" value="F:RNA polymerase binding"/>
    <property type="evidence" value="ECO:0007669"/>
    <property type="project" value="InterPro"/>
</dbReference>
<dbReference type="GO" id="GO:0006354">
    <property type="term" value="P:DNA-templated transcription elongation"/>
    <property type="evidence" value="ECO:0007669"/>
    <property type="project" value="TreeGrafter"/>
</dbReference>
<dbReference type="GO" id="GO:0032784">
    <property type="term" value="P:regulation of DNA-templated transcription elongation"/>
    <property type="evidence" value="ECO:0007669"/>
    <property type="project" value="UniProtKB-UniRule"/>
</dbReference>
<dbReference type="FunFam" id="1.10.287.180:FF:000001">
    <property type="entry name" value="Transcription elongation factor GreA"/>
    <property type="match status" value="1"/>
</dbReference>
<dbReference type="FunFam" id="3.10.50.30:FF:000001">
    <property type="entry name" value="Transcription elongation factor GreA"/>
    <property type="match status" value="1"/>
</dbReference>
<dbReference type="Gene3D" id="3.10.50.30">
    <property type="entry name" value="Transcription elongation factor, GreA/GreB, C-terminal domain"/>
    <property type="match status" value="1"/>
</dbReference>
<dbReference type="Gene3D" id="1.10.287.180">
    <property type="entry name" value="Transcription elongation factor, GreA/GreB, N-terminal domain"/>
    <property type="match status" value="1"/>
</dbReference>
<dbReference type="HAMAP" id="MF_00105">
    <property type="entry name" value="GreA_GreB"/>
    <property type="match status" value="1"/>
</dbReference>
<dbReference type="InterPro" id="IPR036953">
    <property type="entry name" value="GreA/GreB_C_sf"/>
</dbReference>
<dbReference type="InterPro" id="IPR018151">
    <property type="entry name" value="TF_GreA/GreB_CS"/>
</dbReference>
<dbReference type="InterPro" id="IPR006359">
    <property type="entry name" value="Tscrpt_elong_fac_GreA"/>
</dbReference>
<dbReference type="InterPro" id="IPR028624">
    <property type="entry name" value="Tscrpt_elong_fac_GreA/B"/>
</dbReference>
<dbReference type="InterPro" id="IPR001437">
    <property type="entry name" value="Tscrpt_elong_fac_GreA/B_C"/>
</dbReference>
<dbReference type="InterPro" id="IPR023459">
    <property type="entry name" value="Tscrpt_elong_fac_GreA/B_fam"/>
</dbReference>
<dbReference type="InterPro" id="IPR022691">
    <property type="entry name" value="Tscrpt_elong_fac_GreA/B_N"/>
</dbReference>
<dbReference type="InterPro" id="IPR036805">
    <property type="entry name" value="Tscrpt_elong_fac_GreA/B_N_sf"/>
</dbReference>
<dbReference type="NCBIfam" id="TIGR01462">
    <property type="entry name" value="greA"/>
    <property type="match status" value="1"/>
</dbReference>
<dbReference type="NCBIfam" id="NF001261">
    <property type="entry name" value="PRK00226.1-2"/>
    <property type="match status" value="1"/>
</dbReference>
<dbReference type="NCBIfam" id="NF001263">
    <property type="entry name" value="PRK00226.1-4"/>
    <property type="match status" value="1"/>
</dbReference>
<dbReference type="NCBIfam" id="NF001264">
    <property type="entry name" value="PRK00226.1-5"/>
    <property type="match status" value="1"/>
</dbReference>
<dbReference type="PANTHER" id="PTHR30437">
    <property type="entry name" value="TRANSCRIPTION ELONGATION FACTOR GREA"/>
    <property type="match status" value="1"/>
</dbReference>
<dbReference type="PANTHER" id="PTHR30437:SF4">
    <property type="entry name" value="TRANSCRIPTION ELONGATION FACTOR GREA"/>
    <property type="match status" value="1"/>
</dbReference>
<dbReference type="Pfam" id="PF01272">
    <property type="entry name" value="GreA_GreB"/>
    <property type="match status" value="1"/>
</dbReference>
<dbReference type="Pfam" id="PF03449">
    <property type="entry name" value="GreA_GreB_N"/>
    <property type="match status" value="1"/>
</dbReference>
<dbReference type="PIRSF" id="PIRSF006092">
    <property type="entry name" value="GreA_GreB"/>
    <property type="match status" value="1"/>
</dbReference>
<dbReference type="SUPFAM" id="SSF54534">
    <property type="entry name" value="FKBP-like"/>
    <property type="match status" value="1"/>
</dbReference>
<dbReference type="SUPFAM" id="SSF46557">
    <property type="entry name" value="GreA transcript cleavage protein, N-terminal domain"/>
    <property type="match status" value="1"/>
</dbReference>
<dbReference type="PROSITE" id="PS00829">
    <property type="entry name" value="GREAB_1"/>
    <property type="match status" value="1"/>
</dbReference>
<dbReference type="PROSITE" id="PS00830">
    <property type="entry name" value="GREAB_2"/>
    <property type="match status" value="1"/>
</dbReference>
<keyword id="KW-0175">Coiled coil</keyword>
<keyword id="KW-0238">DNA-binding</keyword>
<keyword id="KW-1185">Reference proteome</keyword>
<keyword id="KW-0804">Transcription</keyword>
<keyword id="KW-0805">Transcription regulation</keyword>